<accession>Q9D902</accession>
<accession>Q3U5Y7</accession>
<accession>Q8BTZ2</accession>
<accession>Q8VE14</accession>
<proteinExistence type="evidence at protein level"/>
<reference key="1">
    <citation type="journal article" date="2005" name="Science">
        <title>The transcriptional landscape of the mammalian genome.</title>
        <authorList>
            <person name="Carninci P."/>
            <person name="Kasukawa T."/>
            <person name="Katayama S."/>
            <person name="Gough J."/>
            <person name="Frith M.C."/>
            <person name="Maeda N."/>
            <person name="Oyama R."/>
            <person name="Ravasi T."/>
            <person name="Lenhard B."/>
            <person name="Wells C."/>
            <person name="Kodzius R."/>
            <person name="Shimokawa K."/>
            <person name="Bajic V.B."/>
            <person name="Brenner S.E."/>
            <person name="Batalov S."/>
            <person name="Forrest A.R."/>
            <person name="Zavolan M."/>
            <person name="Davis M.J."/>
            <person name="Wilming L.G."/>
            <person name="Aidinis V."/>
            <person name="Allen J.E."/>
            <person name="Ambesi-Impiombato A."/>
            <person name="Apweiler R."/>
            <person name="Aturaliya R.N."/>
            <person name="Bailey T.L."/>
            <person name="Bansal M."/>
            <person name="Baxter L."/>
            <person name="Beisel K.W."/>
            <person name="Bersano T."/>
            <person name="Bono H."/>
            <person name="Chalk A.M."/>
            <person name="Chiu K.P."/>
            <person name="Choudhary V."/>
            <person name="Christoffels A."/>
            <person name="Clutterbuck D.R."/>
            <person name="Crowe M.L."/>
            <person name="Dalla E."/>
            <person name="Dalrymple B.P."/>
            <person name="de Bono B."/>
            <person name="Della Gatta G."/>
            <person name="di Bernardo D."/>
            <person name="Down T."/>
            <person name="Engstrom P."/>
            <person name="Fagiolini M."/>
            <person name="Faulkner G."/>
            <person name="Fletcher C.F."/>
            <person name="Fukushima T."/>
            <person name="Furuno M."/>
            <person name="Futaki S."/>
            <person name="Gariboldi M."/>
            <person name="Georgii-Hemming P."/>
            <person name="Gingeras T.R."/>
            <person name="Gojobori T."/>
            <person name="Green R.E."/>
            <person name="Gustincich S."/>
            <person name="Harbers M."/>
            <person name="Hayashi Y."/>
            <person name="Hensch T.K."/>
            <person name="Hirokawa N."/>
            <person name="Hill D."/>
            <person name="Huminiecki L."/>
            <person name="Iacono M."/>
            <person name="Ikeo K."/>
            <person name="Iwama A."/>
            <person name="Ishikawa T."/>
            <person name="Jakt M."/>
            <person name="Kanapin A."/>
            <person name="Katoh M."/>
            <person name="Kawasawa Y."/>
            <person name="Kelso J."/>
            <person name="Kitamura H."/>
            <person name="Kitano H."/>
            <person name="Kollias G."/>
            <person name="Krishnan S.P."/>
            <person name="Kruger A."/>
            <person name="Kummerfeld S.K."/>
            <person name="Kurochkin I.V."/>
            <person name="Lareau L.F."/>
            <person name="Lazarevic D."/>
            <person name="Lipovich L."/>
            <person name="Liu J."/>
            <person name="Liuni S."/>
            <person name="McWilliam S."/>
            <person name="Madan Babu M."/>
            <person name="Madera M."/>
            <person name="Marchionni L."/>
            <person name="Matsuda H."/>
            <person name="Matsuzawa S."/>
            <person name="Miki H."/>
            <person name="Mignone F."/>
            <person name="Miyake S."/>
            <person name="Morris K."/>
            <person name="Mottagui-Tabar S."/>
            <person name="Mulder N."/>
            <person name="Nakano N."/>
            <person name="Nakauchi H."/>
            <person name="Ng P."/>
            <person name="Nilsson R."/>
            <person name="Nishiguchi S."/>
            <person name="Nishikawa S."/>
            <person name="Nori F."/>
            <person name="Ohara O."/>
            <person name="Okazaki Y."/>
            <person name="Orlando V."/>
            <person name="Pang K.C."/>
            <person name="Pavan W.J."/>
            <person name="Pavesi G."/>
            <person name="Pesole G."/>
            <person name="Petrovsky N."/>
            <person name="Piazza S."/>
            <person name="Reed J."/>
            <person name="Reid J.F."/>
            <person name="Ring B.Z."/>
            <person name="Ringwald M."/>
            <person name="Rost B."/>
            <person name="Ruan Y."/>
            <person name="Salzberg S.L."/>
            <person name="Sandelin A."/>
            <person name="Schneider C."/>
            <person name="Schoenbach C."/>
            <person name="Sekiguchi K."/>
            <person name="Semple C.A."/>
            <person name="Seno S."/>
            <person name="Sessa L."/>
            <person name="Sheng Y."/>
            <person name="Shibata Y."/>
            <person name="Shimada H."/>
            <person name="Shimada K."/>
            <person name="Silva D."/>
            <person name="Sinclair B."/>
            <person name="Sperling S."/>
            <person name="Stupka E."/>
            <person name="Sugiura K."/>
            <person name="Sultana R."/>
            <person name="Takenaka Y."/>
            <person name="Taki K."/>
            <person name="Tammoja K."/>
            <person name="Tan S.L."/>
            <person name="Tang S."/>
            <person name="Taylor M.S."/>
            <person name="Tegner J."/>
            <person name="Teichmann S.A."/>
            <person name="Ueda H.R."/>
            <person name="van Nimwegen E."/>
            <person name="Verardo R."/>
            <person name="Wei C.L."/>
            <person name="Yagi K."/>
            <person name="Yamanishi H."/>
            <person name="Zabarovsky E."/>
            <person name="Zhu S."/>
            <person name="Zimmer A."/>
            <person name="Hide W."/>
            <person name="Bult C."/>
            <person name="Grimmond S.M."/>
            <person name="Teasdale R.D."/>
            <person name="Liu E.T."/>
            <person name="Brusic V."/>
            <person name="Quackenbush J."/>
            <person name="Wahlestedt C."/>
            <person name="Mattick J.S."/>
            <person name="Hume D.A."/>
            <person name="Kai C."/>
            <person name="Sasaki D."/>
            <person name="Tomaru Y."/>
            <person name="Fukuda S."/>
            <person name="Kanamori-Katayama M."/>
            <person name="Suzuki M."/>
            <person name="Aoki J."/>
            <person name="Arakawa T."/>
            <person name="Iida J."/>
            <person name="Imamura K."/>
            <person name="Itoh M."/>
            <person name="Kato T."/>
            <person name="Kawaji H."/>
            <person name="Kawagashira N."/>
            <person name="Kawashima T."/>
            <person name="Kojima M."/>
            <person name="Kondo S."/>
            <person name="Konno H."/>
            <person name="Nakano K."/>
            <person name="Ninomiya N."/>
            <person name="Nishio T."/>
            <person name="Okada M."/>
            <person name="Plessy C."/>
            <person name="Shibata K."/>
            <person name="Shiraki T."/>
            <person name="Suzuki S."/>
            <person name="Tagami M."/>
            <person name="Waki K."/>
            <person name="Watahiki A."/>
            <person name="Okamura-Oho Y."/>
            <person name="Suzuki H."/>
            <person name="Kawai J."/>
            <person name="Hayashizaki Y."/>
        </authorList>
    </citation>
    <scope>NUCLEOTIDE SEQUENCE [LARGE SCALE MRNA]</scope>
    <source>
        <strain>C57BL/6J</strain>
        <strain>NOD</strain>
        <tissue>Bone marrow</tissue>
        <tissue>Pancreas</tissue>
        <tissue>Thymus</tissue>
        <tissue>Visual cortex</tissue>
    </source>
</reference>
<reference key="2">
    <citation type="journal article" date="2004" name="Genome Res.">
        <title>The status, quality, and expansion of the NIH full-length cDNA project: the Mammalian Gene Collection (MGC).</title>
        <authorList>
            <consortium name="The MGC Project Team"/>
        </authorList>
    </citation>
    <scope>NUCLEOTIDE SEQUENCE [LARGE SCALE MRNA]</scope>
    <source>
        <strain>Czech II</strain>
        <tissue>Mammary gland</tissue>
    </source>
</reference>
<reference key="3">
    <citation type="journal article" date="2010" name="Cell">
        <title>A tissue-specific atlas of mouse protein phosphorylation and expression.</title>
        <authorList>
            <person name="Huttlin E.L."/>
            <person name="Jedrychowski M.P."/>
            <person name="Elias J.E."/>
            <person name="Goswami T."/>
            <person name="Rad R."/>
            <person name="Beausoleil S.A."/>
            <person name="Villen J."/>
            <person name="Haas W."/>
            <person name="Sowa M.E."/>
            <person name="Gygi S.P."/>
        </authorList>
    </citation>
    <scope>IDENTIFICATION BY MASS SPECTROMETRY [LARGE SCALE ANALYSIS]</scope>
    <source>
        <tissue>Lung</tissue>
        <tissue>Testis</tissue>
    </source>
</reference>
<reference key="4">
    <citation type="journal article" date="2013" name="Mol. Cell">
        <title>SIRT5-mediated lysine desuccinylation impacts diverse metabolic pathways.</title>
        <authorList>
            <person name="Park J."/>
            <person name="Chen Y."/>
            <person name="Tishkoff D.X."/>
            <person name="Peng C."/>
            <person name="Tan M."/>
            <person name="Dai L."/>
            <person name="Xie Z."/>
            <person name="Zhang Y."/>
            <person name="Zwaans B.M."/>
            <person name="Skinner M.E."/>
            <person name="Lombard D.B."/>
            <person name="Zhao Y."/>
        </authorList>
    </citation>
    <scope>ACETYLATION [LARGE SCALE ANALYSIS] AT LYS-75</scope>
    <scope>IDENTIFICATION BY MASS SPECTROMETRY [LARGE SCALE ANALYSIS]</scope>
    <source>
        <tissue>Embryonic fibroblast</tissue>
    </source>
</reference>
<gene>
    <name type="primary">Gtf2e2</name>
</gene>
<organism>
    <name type="scientific">Mus musculus</name>
    <name type="common">Mouse</name>
    <dbReference type="NCBI Taxonomy" id="10090"/>
    <lineage>
        <taxon>Eukaryota</taxon>
        <taxon>Metazoa</taxon>
        <taxon>Chordata</taxon>
        <taxon>Craniata</taxon>
        <taxon>Vertebrata</taxon>
        <taxon>Euteleostomi</taxon>
        <taxon>Mammalia</taxon>
        <taxon>Eutheria</taxon>
        <taxon>Euarchontoglires</taxon>
        <taxon>Glires</taxon>
        <taxon>Rodentia</taxon>
        <taxon>Myomorpha</taxon>
        <taxon>Muroidea</taxon>
        <taxon>Muridae</taxon>
        <taxon>Murinae</taxon>
        <taxon>Mus</taxon>
        <taxon>Mus</taxon>
    </lineage>
</organism>
<name>T2EB_MOUSE</name>
<keyword id="KW-0007">Acetylation</keyword>
<keyword id="KW-0238">DNA-binding</keyword>
<keyword id="KW-0539">Nucleus</keyword>
<keyword id="KW-0597">Phosphoprotein</keyword>
<keyword id="KW-1185">Reference proteome</keyword>
<keyword id="KW-0804">Transcription</keyword>
<keyword id="KW-0805">Transcription regulation</keyword>
<sequence length="292" mass="33047">MDPSLLRDRELFKKRALSTPVVEKRAVPSESPSSSSSKKKKAKVEHGGSSGSKQNSDHNNGSFNLKALSGSSGYKFGVLAKIVNYMKTRHQRGDTHPLTLEEILDETQHLDIGLKQKQWLMTEALVNNPKIEVVDGKYAFKPKYNLKDKKALLRLLDNHDQRGLGGILLEDIEEGLPNSQKAVKALGDQILFVSRPDKKKILFFNDKSCQFSVDEEFQKLWRSVTVDSMDEEKIEEYLKRQGISSMQESGPKKVASIQRRKKPASQKKRRFKTHNEHLAGVLKDYSDITPGK</sequence>
<dbReference type="EMBL" id="AK007492">
    <property type="protein sequence ID" value="BAB25066.1"/>
    <property type="molecule type" value="mRNA"/>
</dbReference>
<dbReference type="EMBL" id="AK088342">
    <property type="protein sequence ID" value="BAC40294.1"/>
    <property type="molecule type" value="mRNA"/>
</dbReference>
<dbReference type="EMBL" id="AK150415">
    <property type="protein sequence ID" value="BAE29539.1"/>
    <property type="molecule type" value="mRNA"/>
</dbReference>
<dbReference type="EMBL" id="AK153370">
    <property type="protein sequence ID" value="BAE31938.1"/>
    <property type="molecule type" value="mRNA"/>
</dbReference>
<dbReference type="EMBL" id="AK158783">
    <property type="protein sequence ID" value="BAE34662.1"/>
    <property type="molecule type" value="mRNA"/>
</dbReference>
<dbReference type="EMBL" id="BC020016">
    <property type="protein sequence ID" value="AAH20016.1"/>
    <property type="molecule type" value="mRNA"/>
</dbReference>
<dbReference type="CCDS" id="CCDS22236.1"/>
<dbReference type="RefSeq" id="NP_001161393.1">
    <property type="nucleotide sequence ID" value="NM_001167921.1"/>
</dbReference>
<dbReference type="RefSeq" id="NP_001161394.1">
    <property type="nucleotide sequence ID" value="NM_001167922.1"/>
</dbReference>
<dbReference type="RefSeq" id="NP_080860.3">
    <property type="nucleotide sequence ID" value="NM_026584.3"/>
</dbReference>
<dbReference type="RefSeq" id="XP_006509249.1">
    <property type="nucleotide sequence ID" value="XM_006509186.3"/>
</dbReference>
<dbReference type="RefSeq" id="XP_006509250.1">
    <property type="nucleotide sequence ID" value="XM_006509187.2"/>
</dbReference>
<dbReference type="RefSeq" id="XP_006509251.1">
    <property type="nucleotide sequence ID" value="XM_006509188.4"/>
</dbReference>
<dbReference type="RefSeq" id="XP_030099606.1">
    <property type="nucleotide sequence ID" value="XM_030243746.2"/>
</dbReference>
<dbReference type="RefSeq" id="XP_036010151.1">
    <property type="nucleotide sequence ID" value="XM_036154258.1"/>
</dbReference>
<dbReference type="RefSeq" id="XP_036010153.1">
    <property type="nucleotide sequence ID" value="XM_036154260.1"/>
</dbReference>
<dbReference type="SMR" id="Q9D902"/>
<dbReference type="BioGRID" id="212686">
    <property type="interactions" value="23"/>
</dbReference>
<dbReference type="DIP" id="DIP-49546N"/>
<dbReference type="FunCoup" id="Q9D902">
    <property type="interactions" value="3644"/>
</dbReference>
<dbReference type="IntAct" id="Q9D902">
    <property type="interactions" value="22"/>
</dbReference>
<dbReference type="MINT" id="Q9D902"/>
<dbReference type="STRING" id="10090.ENSMUSP00000132287"/>
<dbReference type="iPTMnet" id="Q9D902"/>
<dbReference type="PhosphoSitePlus" id="Q9D902"/>
<dbReference type="SwissPalm" id="Q9D902"/>
<dbReference type="PaxDb" id="10090-ENSMUSP00000126284"/>
<dbReference type="PeptideAtlas" id="Q9D902"/>
<dbReference type="ProteomicsDB" id="263200"/>
<dbReference type="Pumba" id="Q9D902"/>
<dbReference type="Antibodypedia" id="4040">
    <property type="antibodies" value="283 antibodies from 32 providers"/>
</dbReference>
<dbReference type="DNASU" id="68153"/>
<dbReference type="Ensembl" id="ENSMUST00000167264.8">
    <property type="protein sequence ID" value="ENSMUSP00000129834.2"/>
    <property type="gene ID" value="ENSMUSG00000031585.14"/>
</dbReference>
<dbReference type="Ensembl" id="ENSMUST00000170705.8">
    <property type="protein sequence ID" value="ENSMUSP00000126284.2"/>
    <property type="gene ID" value="ENSMUSG00000031585.14"/>
</dbReference>
<dbReference type="Ensembl" id="ENSMUST00000171010.8">
    <property type="protein sequence ID" value="ENSMUSP00000132287.2"/>
    <property type="gene ID" value="ENSMUSG00000031585.14"/>
</dbReference>
<dbReference type="GeneID" id="68153"/>
<dbReference type="KEGG" id="mmu:68153"/>
<dbReference type="UCSC" id="uc009lkh.2">
    <property type="organism name" value="mouse"/>
</dbReference>
<dbReference type="AGR" id="MGI:1915403"/>
<dbReference type="CTD" id="2961"/>
<dbReference type="MGI" id="MGI:1915403">
    <property type="gene designation" value="Gtf2e2"/>
</dbReference>
<dbReference type="VEuPathDB" id="HostDB:ENSMUSG00000031585"/>
<dbReference type="eggNOG" id="KOG3095">
    <property type="taxonomic scope" value="Eukaryota"/>
</dbReference>
<dbReference type="GeneTree" id="ENSGT00390000011749"/>
<dbReference type="HOGENOM" id="CLU_086770_0_0_1"/>
<dbReference type="InParanoid" id="Q9D902"/>
<dbReference type="OMA" id="AFKRRAM"/>
<dbReference type="OrthoDB" id="5323195at2759"/>
<dbReference type="PhylomeDB" id="Q9D902"/>
<dbReference type="TreeFam" id="TF105901"/>
<dbReference type="Reactome" id="R-MMU-674695">
    <property type="pathway name" value="RNA Polymerase II Pre-transcription Events"/>
</dbReference>
<dbReference type="Reactome" id="R-MMU-6807505">
    <property type="pathway name" value="RNA polymerase II transcribes snRNA genes"/>
</dbReference>
<dbReference type="Reactome" id="R-MMU-73776">
    <property type="pathway name" value="RNA Polymerase II Promoter Escape"/>
</dbReference>
<dbReference type="Reactome" id="R-MMU-73779">
    <property type="pathway name" value="RNA Polymerase II Transcription Pre-Initiation And Promoter Opening"/>
</dbReference>
<dbReference type="Reactome" id="R-MMU-75953">
    <property type="pathway name" value="RNA Polymerase II Transcription Initiation"/>
</dbReference>
<dbReference type="Reactome" id="R-MMU-76042">
    <property type="pathway name" value="RNA Polymerase II Transcription Initiation And Promoter Clearance"/>
</dbReference>
<dbReference type="BioGRID-ORCS" id="68153">
    <property type="hits" value="21 hits in 77 CRISPR screens"/>
</dbReference>
<dbReference type="ChiTaRS" id="Gtf2e2">
    <property type="organism name" value="mouse"/>
</dbReference>
<dbReference type="PRO" id="PR:Q9D902"/>
<dbReference type="Proteomes" id="UP000000589">
    <property type="component" value="Chromosome 8"/>
</dbReference>
<dbReference type="RNAct" id="Q9D902">
    <property type="molecule type" value="protein"/>
</dbReference>
<dbReference type="Bgee" id="ENSMUSG00000031585">
    <property type="expression patterns" value="Expressed in otic placode and 265 other cell types or tissues"/>
</dbReference>
<dbReference type="ExpressionAtlas" id="Q9D902">
    <property type="expression patterns" value="baseline and differential"/>
</dbReference>
<dbReference type="GO" id="GO:0005829">
    <property type="term" value="C:cytosol"/>
    <property type="evidence" value="ECO:0007669"/>
    <property type="project" value="Ensembl"/>
</dbReference>
<dbReference type="GO" id="GO:0005669">
    <property type="term" value="C:transcription factor TFIID complex"/>
    <property type="evidence" value="ECO:0007669"/>
    <property type="project" value="Ensembl"/>
</dbReference>
<dbReference type="GO" id="GO:0005673">
    <property type="term" value="C:transcription factor TFIIE complex"/>
    <property type="evidence" value="ECO:0007669"/>
    <property type="project" value="InterPro"/>
</dbReference>
<dbReference type="GO" id="GO:0003677">
    <property type="term" value="F:DNA binding"/>
    <property type="evidence" value="ECO:0007669"/>
    <property type="project" value="UniProtKB-KW"/>
</dbReference>
<dbReference type="GO" id="GO:0016251">
    <property type="term" value="F:RNA polymerase II general transcription initiation factor activity"/>
    <property type="evidence" value="ECO:0007669"/>
    <property type="project" value="Ensembl"/>
</dbReference>
<dbReference type="GO" id="GO:0006367">
    <property type="term" value="P:transcription initiation at RNA polymerase II promoter"/>
    <property type="evidence" value="ECO:0007669"/>
    <property type="project" value="InterPro"/>
</dbReference>
<dbReference type="CDD" id="cd07977">
    <property type="entry name" value="TFIIE_beta_winged_helix"/>
    <property type="match status" value="1"/>
</dbReference>
<dbReference type="FunFam" id="1.10.10.10:FF:000177">
    <property type="entry name" value="Transcription initiation factor IIE subunit beta"/>
    <property type="match status" value="1"/>
</dbReference>
<dbReference type="Gene3D" id="1.10.10.10">
    <property type="entry name" value="Winged helix-like DNA-binding domain superfamily/Winged helix DNA-binding domain"/>
    <property type="match status" value="1"/>
</dbReference>
<dbReference type="InterPro" id="IPR040501">
    <property type="entry name" value="TFA2_Winged_2"/>
</dbReference>
<dbReference type="InterPro" id="IPR016656">
    <property type="entry name" value="TFIIE-bsu"/>
</dbReference>
<dbReference type="InterPro" id="IPR003166">
    <property type="entry name" value="TFIIE_bsu_DNA-bd"/>
</dbReference>
<dbReference type="InterPro" id="IPR036388">
    <property type="entry name" value="WH-like_DNA-bd_sf"/>
</dbReference>
<dbReference type="InterPro" id="IPR036390">
    <property type="entry name" value="WH_DNA-bd_sf"/>
</dbReference>
<dbReference type="PANTHER" id="PTHR12716:SF8">
    <property type="entry name" value="TRANSCRIPTION INITIATION FACTOR IIE SUBUNIT BETA"/>
    <property type="match status" value="1"/>
</dbReference>
<dbReference type="PANTHER" id="PTHR12716">
    <property type="entry name" value="TRANSCRIPTION INITIATION FACTOR IIE, BETA SUBUNIT"/>
    <property type="match status" value="1"/>
</dbReference>
<dbReference type="Pfam" id="PF18121">
    <property type="entry name" value="TFA2_Winged_2"/>
    <property type="match status" value="1"/>
</dbReference>
<dbReference type="Pfam" id="PF02186">
    <property type="entry name" value="TFIIE_beta"/>
    <property type="match status" value="1"/>
</dbReference>
<dbReference type="PIRSF" id="PIRSF016398">
    <property type="entry name" value="TFIIE-beta"/>
    <property type="match status" value="1"/>
</dbReference>
<dbReference type="SUPFAM" id="SSF46785">
    <property type="entry name" value="Winged helix' DNA-binding domain"/>
    <property type="match status" value="1"/>
</dbReference>
<dbReference type="PROSITE" id="PS51351">
    <property type="entry name" value="TFIIE_BETA_C"/>
    <property type="match status" value="1"/>
</dbReference>
<evidence type="ECO:0000250" key="1">
    <source>
        <dbReference type="UniProtKB" id="P29084"/>
    </source>
</evidence>
<evidence type="ECO:0000255" key="2">
    <source>
        <dbReference type="PROSITE-ProRule" id="PRU00682"/>
    </source>
</evidence>
<evidence type="ECO:0000256" key="3">
    <source>
        <dbReference type="SAM" id="MobiDB-lite"/>
    </source>
</evidence>
<evidence type="ECO:0000305" key="4"/>
<evidence type="ECO:0007744" key="5">
    <source>
    </source>
</evidence>
<comment type="function">
    <text evidence="1">Recruits TFIIH to the initiation complex and stimulates the RNA polymerase II C-terminal domain kinase and DNA-dependent ATPase activities of TFIIH. Both TFIIH and TFIIE are required for promoter clearance by RNA polymerase.</text>
</comment>
<comment type="subunit">
    <text evidence="1">Tetramer of two alpha and two beta chains. Interacts with FACT subunit SUPT16H. Interacts with ATF7IP. Interacts with SND1. Part of TBP-based Pol II pre-initiation complex (PIC), in which Pol II core assembles with general transcription factors and other specific initiation factors including GTF2E1, GTF2E2, GTF2F1, GTF2F2, TCEA1, ERCC2, ERCC3, GTF2H2, GTF2H3, GTF2H4, GTF2H5, GTF2A1, GTF2A2, GTF2B and TBP; this large multi-subunit PIC complex mediates DNA unwinding and targets Pol II core to the transcription start site where the first phosphodiester bond forms.</text>
</comment>
<comment type="interaction">
    <interactant intactId="EBI-309435">
        <id>Q9D902</id>
    </interactant>
    <interactant intactId="EBI-16024836">
        <id>Q7TNS8</id>
        <label>Epop</label>
    </interactant>
    <organismsDiffer>false</organismsDiffer>
    <experiments>2</experiments>
</comment>
<comment type="subcellular location">
    <subcellularLocation>
        <location evidence="1">Nucleus</location>
    </subcellularLocation>
</comment>
<comment type="similarity">
    <text evidence="4">Belongs to the TFIIE beta subunit family.</text>
</comment>
<protein>
    <recommendedName>
        <fullName>General transcription factor IIE subunit 2</fullName>
    </recommendedName>
    <alternativeName>
        <fullName>Transcription initiation factor IIE subunit beta</fullName>
        <shortName>TFIIE-beta</shortName>
    </alternativeName>
</protein>
<feature type="chain" id="PRO_0000211227" description="General transcription factor IIE subunit 2">
    <location>
        <begin position="1"/>
        <end position="292"/>
    </location>
</feature>
<feature type="DNA-binding region" description="TFIIE beta" evidence="2">
    <location>
        <begin position="67"/>
        <end position="147"/>
    </location>
</feature>
<feature type="region of interest" description="Disordered" evidence="3">
    <location>
        <begin position="17"/>
        <end position="64"/>
    </location>
</feature>
<feature type="region of interest" description="Disordered" evidence="3">
    <location>
        <begin position="245"/>
        <end position="277"/>
    </location>
</feature>
<feature type="compositionally biased region" description="Polar residues" evidence="3">
    <location>
        <begin position="51"/>
        <end position="63"/>
    </location>
</feature>
<feature type="compositionally biased region" description="Basic residues" evidence="3">
    <location>
        <begin position="258"/>
        <end position="272"/>
    </location>
</feature>
<feature type="modified residue" description="N-acetylmethionine" evidence="1">
    <location>
        <position position="1"/>
    </location>
</feature>
<feature type="modified residue" description="Phosphoserine" evidence="1">
    <location>
        <position position="62"/>
    </location>
</feature>
<feature type="modified residue" description="N6-acetyllysine" evidence="5">
    <location>
        <position position="75"/>
    </location>
</feature>
<feature type="sequence conflict" description="In Ref. 1; BAB25066." evidence="4" ref="1">
    <original>P</original>
    <variation>L</variation>
    <location>
        <position position="20"/>
    </location>
</feature>
<feature type="sequence conflict" description="In Ref. 1; BAB25066." evidence="4" ref="1">
    <original>A</original>
    <variation>S</variation>
    <location>
        <position position="80"/>
    </location>
</feature>